<feature type="signal peptide" evidence="2">
    <location>
        <begin position="1"/>
        <end position="23"/>
    </location>
</feature>
<feature type="chain" id="PRO_0000295079" description="Putative cysteine-rich receptor-like protein kinase 32">
    <location>
        <begin position="24"/>
        <end position="656"/>
    </location>
</feature>
<feature type="topological domain" description="Extracellular" evidence="2">
    <location>
        <begin position="24"/>
        <end position="262"/>
    </location>
</feature>
<feature type="transmembrane region" description="Helical" evidence="2">
    <location>
        <begin position="263"/>
        <end position="283"/>
    </location>
</feature>
<feature type="topological domain" description="Cytoplasmic" evidence="2">
    <location>
        <begin position="284"/>
        <end position="656"/>
    </location>
</feature>
<feature type="domain" description="Gnk2-homologous 1" evidence="4">
    <location>
        <begin position="24"/>
        <end position="126"/>
    </location>
</feature>
<feature type="domain" description="Gnk2-homologous 2" evidence="4">
    <location>
        <begin position="134"/>
        <end position="238"/>
    </location>
</feature>
<feature type="domain" description="Protein kinase" evidence="3">
    <location>
        <begin position="321"/>
        <end position="606"/>
    </location>
</feature>
<feature type="active site" description="Proton acceptor" evidence="3 5">
    <location>
        <position position="454"/>
    </location>
</feature>
<feature type="binding site" evidence="3">
    <location>
        <begin position="327"/>
        <end position="335"/>
    </location>
    <ligand>
        <name>ATP</name>
        <dbReference type="ChEBI" id="CHEBI:30616"/>
    </ligand>
</feature>
<feature type="binding site" evidence="3">
    <location>
        <position position="349"/>
    </location>
    <ligand>
        <name>ATP</name>
        <dbReference type="ChEBI" id="CHEBI:30616"/>
    </ligand>
</feature>
<feature type="modified residue" description="Phosphotyrosine" evidence="1">
    <location>
        <position position="394"/>
    </location>
</feature>
<feature type="modified residue" description="Phosphoserine" evidence="1">
    <location>
        <position position="458"/>
    </location>
</feature>
<feature type="modified residue" description="Phosphothreonine" evidence="1">
    <location>
        <position position="494"/>
    </location>
</feature>
<feature type="modified residue" description="Phosphotyrosine" evidence="1">
    <location>
        <position position="502"/>
    </location>
</feature>
<feature type="glycosylation site" description="N-linked (GlcNAc...) asparagine" evidence="2">
    <location>
        <position position="35"/>
    </location>
</feature>
<feature type="glycosylation site" description="N-linked (GlcNAc...) asparagine" evidence="2">
    <location>
        <position position="52"/>
    </location>
</feature>
<feature type="glycosylation site" description="N-linked (GlcNAc...) asparagine" evidence="2">
    <location>
        <position position="61"/>
    </location>
</feature>
<feature type="glycosylation site" description="N-linked (GlcNAc...) asparagine" evidence="2">
    <location>
        <position position="103"/>
    </location>
</feature>
<feature type="glycosylation site" description="N-linked (GlcNAc...) asparagine" evidence="2">
    <location>
        <position position="123"/>
    </location>
</feature>
<evidence type="ECO:0000250" key="1">
    <source>
        <dbReference type="UniProtKB" id="O48814"/>
    </source>
</evidence>
<evidence type="ECO:0000255" key="2"/>
<evidence type="ECO:0000255" key="3">
    <source>
        <dbReference type="PROSITE-ProRule" id="PRU00159"/>
    </source>
</evidence>
<evidence type="ECO:0000255" key="4">
    <source>
        <dbReference type="PROSITE-ProRule" id="PRU00806"/>
    </source>
</evidence>
<evidence type="ECO:0000255" key="5">
    <source>
        <dbReference type="PROSITE-ProRule" id="PRU10027"/>
    </source>
</evidence>
<evidence type="ECO:0000305" key="6"/>
<dbReference type="EC" id="2.7.11.-"/>
<dbReference type="EMBL" id="AL050399">
    <property type="protein sequence ID" value="CAB82153.1"/>
    <property type="molecule type" value="Genomic_DNA"/>
</dbReference>
<dbReference type="EMBL" id="AL161532">
    <property type="protein sequence ID" value="CAB78191.1"/>
    <property type="molecule type" value="Genomic_DNA"/>
</dbReference>
<dbReference type="EMBL" id="CP002687">
    <property type="protein sequence ID" value="AEE83016.1"/>
    <property type="molecule type" value="Genomic_DNA"/>
</dbReference>
<dbReference type="PIR" id="T10568">
    <property type="entry name" value="T10568"/>
</dbReference>
<dbReference type="RefSeq" id="NP_192887.1">
    <property type="nucleotide sequence ID" value="NM_117219.2"/>
</dbReference>
<dbReference type="SMR" id="Q9LDS6"/>
<dbReference type="BioGRID" id="12052">
    <property type="interactions" value="5"/>
</dbReference>
<dbReference type="IntAct" id="Q9LDS6">
    <property type="interactions" value="5"/>
</dbReference>
<dbReference type="STRING" id="3702.Q9LDS6"/>
<dbReference type="GlyCosmos" id="Q9LDS6">
    <property type="glycosylation" value="5 sites, No reported glycans"/>
</dbReference>
<dbReference type="GlyGen" id="Q9LDS6">
    <property type="glycosylation" value="6 sites"/>
</dbReference>
<dbReference type="PaxDb" id="3702-AT4G11480.1"/>
<dbReference type="EnsemblPlants" id="AT4G11480.1">
    <property type="protein sequence ID" value="AT4G11480.1"/>
    <property type="gene ID" value="AT4G11480"/>
</dbReference>
<dbReference type="GeneID" id="826753"/>
<dbReference type="Gramene" id="AT4G11480.1">
    <property type="protein sequence ID" value="AT4G11480.1"/>
    <property type="gene ID" value="AT4G11480"/>
</dbReference>
<dbReference type="KEGG" id="ath:AT4G11480"/>
<dbReference type="Araport" id="AT4G11480"/>
<dbReference type="TAIR" id="AT4G11480">
    <property type="gene designation" value="CRK32"/>
</dbReference>
<dbReference type="HOGENOM" id="CLU_000288_35_2_1"/>
<dbReference type="InParanoid" id="Q9LDS6"/>
<dbReference type="OMA" id="YSIVTPR"/>
<dbReference type="PhylomeDB" id="Q9LDS6"/>
<dbReference type="PRO" id="PR:Q9LDS6"/>
<dbReference type="Proteomes" id="UP000006548">
    <property type="component" value="Chromosome 4"/>
</dbReference>
<dbReference type="ExpressionAtlas" id="Q9LDS6">
    <property type="expression patterns" value="baseline and differential"/>
</dbReference>
<dbReference type="GO" id="GO:0016020">
    <property type="term" value="C:membrane"/>
    <property type="evidence" value="ECO:0007669"/>
    <property type="project" value="UniProtKB-SubCell"/>
</dbReference>
<dbReference type="GO" id="GO:0005524">
    <property type="term" value="F:ATP binding"/>
    <property type="evidence" value="ECO:0007669"/>
    <property type="project" value="UniProtKB-KW"/>
</dbReference>
<dbReference type="GO" id="GO:0106310">
    <property type="term" value="F:protein serine kinase activity"/>
    <property type="evidence" value="ECO:0007669"/>
    <property type="project" value="RHEA"/>
</dbReference>
<dbReference type="GO" id="GO:0004674">
    <property type="term" value="F:protein serine/threonine kinase activity"/>
    <property type="evidence" value="ECO:0007669"/>
    <property type="project" value="UniProtKB-KW"/>
</dbReference>
<dbReference type="CDD" id="cd23509">
    <property type="entry name" value="Gnk2-like"/>
    <property type="match status" value="2"/>
</dbReference>
<dbReference type="CDD" id="cd14066">
    <property type="entry name" value="STKc_IRAK"/>
    <property type="match status" value="1"/>
</dbReference>
<dbReference type="FunFam" id="3.30.200.20:FF:000142">
    <property type="entry name" value="Cysteine-rich receptor-like protein kinase 10"/>
    <property type="match status" value="1"/>
</dbReference>
<dbReference type="FunFam" id="1.10.510.10:FF:000129">
    <property type="entry name" value="cysteine-rich receptor-like protein kinase 10"/>
    <property type="match status" value="1"/>
</dbReference>
<dbReference type="FunFam" id="3.30.430.20:FF:000007">
    <property type="entry name" value="Cysteine-rich receptor-like protein kinase 11"/>
    <property type="match status" value="1"/>
</dbReference>
<dbReference type="FunFam" id="3.30.430.20:FF:000003">
    <property type="entry name" value="Cysteine-rich RLK (RECEPTOR-like protein kinase) 10"/>
    <property type="match status" value="1"/>
</dbReference>
<dbReference type="Gene3D" id="3.30.430.20">
    <property type="entry name" value="Gnk2 domain, C-X8-C-X2-C motif"/>
    <property type="match status" value="2"/>
</dbReference>
<dbReference type="Gene3D" id="3.30.200.20">
    <property type="entry name" value="Phosphorylase Kinase, domain 1"/>
    <property type="match status" value="1"/>
</dbReference>
<dbReference type="Gene3D" id="1.10.510.10">
    <property type="entry name" value="Transferase(Phosphotransferase) domain 1"/>
    <property type="match status" value="1"/>
</dbReference>
<dbReference type="InterPro" id="IPR002902">
    <property type="entry name" value="GNK2"/>
</dbReference>
<dbReference type="InterPro" id="IPR038408">
    <property type="entry name" value="GNK2_sf"/>
</dbReference>
<dbReference type="InterPro" id="IPR011009">
    <property type="entry name" value="Kinase-like_dom_sf"/>
</dbReference>
<dbReference type="InterPro" id="IPR000719">
    <property type="entry name" value="Prot_kinase_dom"/>
</dbReference>
<dbReference type="InterPro" id="IPR017441">
    <property type="entry name" value="Protein_kinase_ATP_BS"/>
</dbReference>
<dbReference type="InterPro" id="IPR001245">
    <property type="entry name" value="Ser-Thr/Tyr_kinase_cat_dom"/>
</dbReference>
<dbReference type="InterPro" id="IPR008271">
    <property type="entry name" value="Ser/Thr_kinase_AS"/>
</dbReference>
<dbReference type="PANTHER" id="PTHR27002:SF783">
    <property type="entry name" value="CYSTEINE-RICH RECEPTOR-LIKE PROTEIN KINASE 31-RELATED"/>
    <property type="match status" value="1"/>
</dbReference>
<dbReference type="PANTHER" id="PTHR27002">
    <property type="entry name" value="RECEPTOR-LIKE SERINE/THREONINE-PROTEIN KINASE SD1-8"/>
    <property type="match status" value="1"/>
</dbReference>
<dbReference type="Pfam" id="PF07714">
    <property type="entry name" value="PK_Tyr_Ser-Thr"/>
    <property type="match status" value="1"/>
</dbReference>
<dbReference type="Pfam" id="PF01657">
    <property type="entry name" value="Stress-antifung"/>
    <property type="match status" value="2"/>
</dbReference>
<dbReference type="SMART" id="SM00220">
    <property type="entry name" value="S_TKc"/>
    <property type="match status" value="1"/>
</dbReference>
<dbReference type="SUPFAM" id="SSF56112">
    <property type="entry name" value="Protein kinase-like (PK-like)"/>
    <property type="match status" value="1"/>
</dbReference>
<dbReference type="PROSITE" id="PS51473">
    <property type="entry name" value="GNK2"/>
    <property type="match status" value="2"/>
</dbReference>
<dbReference type="PROSITE" id="PS00107">
    <property type="entry name" value="PROTEIN_KINASE_ATP"/>
    <property type="match status" value="1"/>
</dbReference>
<dbReference type="PROSITE" id="PS50011">
    <property type="entry name" value="PROTEIN_KINASE_DOM"/>
    <property type="match status" value="1"/>
</dbReference>
<dbReference type="PROSITE" id="PS00108">
    <property type="entry name" value="PROTEIN_KINASE_ST"/>
    <property type="match status" value="1"/>
</dbReference>
<organism>
    <name type="scientific">Arabidopsis thaliana</name>
    <name type="common">Mouse-ear cress</name>
    <dbReference type="NCBI Taxonomy" id="3702"/>
    <lineage>
        <taxon>Eukaryota</taxon>
        <taxon>Viridiplantae</taxon>
        <taxon>Streptophyta</taxon>
        <taxon>Embryophyta</taxon>
        <taxon>Tracheophyta</taxon>
        <taxon>Spermatophyta</taxon>
        <taxon>Magnoliopsida</taxon>
        <taxon>eudicotyledons</taxon>
        <taxon>Gunneridae</taxon>
        <taxon>Pentapetalae</taxon>
        <taxon>rosids</taxon>
        <taxon>malvids</taxon>
        <taxon>Brassicales</taxon>
        <taxon>Brassicaceae</taxon>
        <taxon>Camelineae</taxon>
        <taxon>Arabidopsis</taxon>
    </lineage>
</organism>
<proteinExistence type="inferred from homology"/>
<accession>Q9LDS6</accession>
<reference key="1">
    <citation type="journal article" date="1999" name="Nature">
        <title>Sequence and analysis of chromosome 4 of the plant Arabidopsis thaliana.</title>
        <authorList>
            <person name="Mayer K.F.X."/>
            <person name="Schueller C."/>
            <person name="Wambutt R."/>
            <person name="Murphy G."/>
            <person name="Volckaert G."/>
            <person name="Pohl T."/>
            <person name="Duesterhoeft A."/>
            <person name="Stiekema W."/>
            <person name="Entian K.-D."/>
            <person name="Terryn N."/>
            <person name="Harris B."/>
            <person name="Ansorge W."/>
            <person name="Brandt P."/>
            <person name="Grivell L.A."/>
            <person name="Rieger M."/>
            <person name="Weichselgartner M."/>
            <person name="de Simone V."/>
            <person name="Obermaier B."/>
            <person name="Mache R."/>
            <person name="Mueller M."/>
            <person name="Kreis M."/>
            <person name="Delseny M."/>
            <person name="Puigdomenech P."/>
            <person name="Watson M."/>
            <person name="Schmidtheini T."/>
            <person name="Reichert B."/>
            <person name="Portetelle D."/>
            <person name="Perez-Alonso M."/>
            <person name="Boutry M."/>
            <person name="Bancroft I."/>
            <person name="Vos P."/>
            <person name="Hoheisel J."/>
            <person name="Zimmermann W."/>
            <person name="Wedler H."/>
            <person name="Ridley P."/>
            <person name="Langham S.-A."/>
            <person name="McCullagh B."/>
            <person name="Bilham L."/>
            <person name="Robben J."/>
            <person name="van der Schueren J."/>
            <person name="Grymonprez B."/>
            <person name="Chuang Y.-J."/>
            <person name="Vandenbussche F."/>
            <person name="Braeken M."/>
            <person name="Weltjens I."/>
            <person name="Voet M."/>
            <person name="Bastiaens I."/>
            <person name="Aert R."/>
            <person name="Defoor E."/>
            <person name="Weitzenegger T."/>
            <person name="Bothe G."/>
            <person name="Ramsperger U."/>
            <person name="Hilbert H."/>
            <person name="Braun M."/>
            <person name="Holzer E."/>
            <person name="Brandt A."/>
            <person name="Peters S."/>
            <person name="van Staveren M."/>
            <person name="Dirkse W."/>
            <person name="Mooijman P."/>
            <person name="Klein Lankhorst R."/>
            <person name="Rose M."/>
            <person name="Hauf J."/>
            <person name="Koetter P."/>
            <person name="Berneiser S."/>
            <person name="Hempel S."/>
            <person name="Feldpausch M."/>
            <person name="Lamberth S."/>
            <person name="Van den Daele H."/>
            <person name="De Keyser A."/>
            <person name="Buysshaert C."/>
            <person name="Gielen J."/>
            <person name="Villarroel R."/>
            <person name="De Clercq R."/>
            <person name="van Montagu M."/>
            <person name="Rogers J."/>
            <person name="Cronin A."/>
            <person name="Quail M.A."/>
            <person name="Bray-Allen S."/>
            <person name="Clark L."/>
            <person name="Doggett J."/>
            <person name="Hall S."/>
            <person name="Kay M."/>
            <person name="Lennard N."/>
            <person name="McLay K."/>
            <person name="Mayes R."/>
            <person name="Pettett A."/>
            <person name="Rajandream M.A."/>
            <person name="Lyne M."/>
            <person name="Benes V."/>
            <person name="Rechmann S."/>
            <person name="Borkova D."/>
            <person name="Bloecker H."/>
            <person name="Scharfe M."/>
            <person name="Grimm M."/>
            <person name="Loehnert T.-H."/>
            <person name="Dose S."/>
            <person name="de Haan M."/>
            <person name="Maarse A.C."/>
            <person name="Schaefer M."/>
            <person name="Mueller-Auer S."/>
            <person name="Gabel C."/>
            <person name="Fuchs M."/>
            <person name="Fartmann B."/>
            <person name="Granderath K."/>
            <person name="Dauner D."/>
            <person name="Herzl A."/>
            <person name="Neumann S."/>
            <person name="Argiriou A."/>
            <person name="Vitale D."/>
            <person name="Liguori R."/>
            <person name="Piravandi E."/>
            <person name="Massenet O."/>
            <person name="Quigley F."/>
            <person name="Clabauld G."/>
            <person name="Muendlein A."/>
            <person name="Felber R."/>
            <person name="Schnabl S."/>
            <person name="Hiller R."/>
            <person name="Schmidt W."/>
            <person name="Lecharny A."/>
            <person name="Aubourg S."/>
            <person name="Chefdor F."/>
            <person name="Cooke R."/>
            <person name="Berger C."/>
            <person name="Monfort A."/>
            <person name="Casacuberta E."/>
            <person name="Gibbons T."/>
            <person name="Weber N."/>
            <person name="Vandenbol M."/>
            <person name="Bargues M."/>
            <person name="Terol J."/>
            <person name="Torres A."/>
            <person name="Perez-Perez A."/>
            <person name="Purnelle B."/>
            <person name="Bent E."/>
            <person name="Johnson S."/>
            <person name="Tacon D."/>
            <person name="Jesse T."/>
            <person name="Heijnen L."/>
            <person name="Schwarz S."/>
            <person name="Scholler P."/>
            <person name="Heber S."/>
            <person name="Francs P."/>
            <person name="Bielke C."/>
            <person name="Frishman D."/>
            <person name="Haase D."/>
            <person name="Lemcke K."/>
            <person name="Mewes H.-W."/>
            <person name="Stocker S."/>
            <person name="Zaccaria P."/>
            <person name="Bevan M."/>
            <person name="Wilson R.K."/>
            <person name="de la Bastide M."/>
            <person name="Habermann K."/>
            <person name="Parnell L."/>
            <person name="Dedhia N."/>
            <person name="Gnoj L."/>
            <person name="Schutz K."/>
            <person name="Huang E."/>
            <person name="Spiegel L."/>
            <person name="Sekhon M."/>
            <person name="Murray J."/>
            <person name="Sheet P."/>
            <person name="Cordes M."/>
            <person name="Abu-Threideh J."/>
            <person name="Stoneking T."/>
            <person name="Kalicki J."/>
            <person name="Graves T."/>
            <person name="Harmon G."/>
            <person name="Edwards J."/>
            <person name="Latreille P."/>
            <person name="Courtney L."/>
            <person name="Cloud J."/>
            <person name="Abbott A."/>
            <person name="Scott K."/>
            <person name="Johnson D."/>
            <person name="Minx P."/>
            <person name="Bentley D."/>
            <person name="Fulton B."/>
            <person name="Miller N."/>
            <person name="Greco T."/>
            <person name="Kemp K."/>
            <person name="Kramer J."/>
            <person name="Fulton L."/>
            <person name="Mardis E."/>
            <person name="Dante M."/>
            <person name="Pepin K."/>
            <person name="Hillier L.W."/>
            <person name="Nelson J."/>
            <person name="Spieth J."/>
            <person name="Ryan E."/>
            <person name="Andrews S."/>
            <person name="Geisel C."/>
            <person name="Layman D."/>
            <person name="Du H."/>
            <person name="Ali J."/>
            <person name="Berghoff A."/>
            <person name="Jones K."/>
            <person name="Drone K."/>
            <person name="Cotton M."/>
            <person name="Joshu C."/>
            <person name="Antonoiu B."/>
            <person name="Zidanic M."/>
            <person name="Strong C."/>
            <person name="Sun H."/>
            <person name="Lamar B."/>
            <person name="Yordan C."/>
            <person name="Ma P."/>
            <person name="Zhong J."/>
            <person name="Preston R."/>
            <person name="Vil D."/>
            <person name="Shekher M."/>
            <person name="Matero A."/>
            <person name="Shah R."/>
            <person name="Swaby I.K."/>
            <person name="O'Shaughnessy A."/>
            <person name="Rodriguez M."/>
            <person name="Hoffman J."/>
            <person name="Till S."/>
            <person name="Granat S."/>
            <person name="Shohdy N."/>
            <person name="Hasegawa A."/>
            <person name="Hameed A."/>
            <person name="Lodhi M."/>
            <person name="Johnson A."/>
            <person name="Chen E."/>
            <person name="Marra M.A."/>
            <person name="Martienssen R."/>
            <person name="McCombie W.R."/>
        </authorList>
    </citation>
    <scope>NUCLEOTIDE SEQUENCE [LARGE SCALE GENOMIC DNA]</scope>
    <source>
        <strain>cv. Columbia</strain>
    </source>
</reference>
<reference key="2">
    <citation type="journal article" date="2017" name="Plant J.">
        <title>Araport11: a complete reannotation of the Arabidopsis thaliana reference genome.</title>
        <authorList>
            <person name="Cheng C.Y."/>
            <person name="Krishnakumar V."/>
            <person name="Chan A.P."/>
            <person name="Thibaud-Nissen F."/>
            <person name="Schobel S."/>
            <person name="Town C.D."/>
        </authorList>
    </citation>
    <scope>GENOME REANNOTATION</scope>
    <source>
        <strain>cv. Columbia</strain>
    </source>
</reference>
<reference key="3">
    <citation type="journal article" date="2001" name="Plant Physiol.">
        <title>A superfamily of proteins with novel cysteine-rich repeats.</title>
        <authorList>
            <person name="Chen Z."/>
        </authorList>
    </citation>
    <scope>GENE FAMILY ORGANIZATION</scope>
    <scope>NOMENCLATURE</scope>
</reference>
<protein>
    <recommendedName>
        <fullName>Putative cysteine-rich receptor-like protein kinase 32</fullName>
        <shortName>Cysteine-rich RLK32</shortName>
        <ecNumber>2.7.11.-</ecNumber>
    </recommendedName>
</protein>
<sequence>MCLQNLLSILCFVLAISFGYVSAQKCVDSMFFRPNGTYDTNRHLILSNLASNVSSRDGYYNGSVGEGPDRIYALGLCIPGTDPKVCDDCMQIASTGILQNCPNQTDSYDWRSQKTLCFVRYSNSSFFNKMDLEPTMVIGDLNSGLFQGDLAAYTRTWEEFMNSMITRVGRTRYLADISPRIGSARIYALMQCIRGISSMECETCIRDNVRMYQSCCNGFIGGTIRKPVCFFRWDGSEYLGAFGDTPSLPPPSPDGKTISTGAIVAVVVSVVIFVVLLALVLVIRKRRQSYKTLKPKTDDDMTSPQSLQFDFMTLEAATDKFSRNNKLGKGGFGEVYKGMLPNETEVAVKRLSSNSGQGTQEFKNEVVIVAKLQHKNLVRLLGFCLERDEQILVYEFVPNKSLNYFLFGNKQKHLLDPTKKSQLDWKRRYNIIGGITRGLLYLHQDSRLTIIHRDIKASNILLDADMNPKIADFGMARNFRVDQTEDNTRRVVGTFGYMPPEYVTHGQFSTKSDVYSFGVLILEIVCGKKNSSFYKIDDSGGNLVTHVWRLWNNDSPLDLIDPAIEESCDNDKVIRCIHIGLLCVQETPVDRPEMSTIFQMLTNSSITLPVPRPPGFFFRNRSNLDPLTYGSELGQSSSKSIPYTIDSASITRVTPR</sequence>
<name>CRK32_ARATH</name>
<gene>
    <name type="primary">CRK32</name>
    <name type="ordered locus">At4g11480</name>
    <name type="ORF">F25E4.100</name>
</gene>
<keyword id="KW-0067">ATP-binding</keyword>
<keyword id="KW-0325">Glycoprotein</keyword>
<keyword id="KW-0418">Kinase</keyword>
<keyword id="KW-0472">Membrane</keyword>
<keyword id="KW-0547">Nucleotide-binding</keyword>
<keyword id="KW-0597">Phosphoprotein</keyword>
<keyword id="KW-0675">Receptor</keyword>
<keyword id="KW-1185">Reference proteome</keyword>
<keyword id="KW-0677">Repeat</keyword>
<keyword id="KW-0723">Serine/threonine-protein kinase</keyword>
<keyword id="KW-0732">Signal</keyword>
<keyword id="KW-0808">Transferase</keyword>
<keyword id="KW-0812">Transmembrane</keyword>
<keyword id="KW-1133">Transmembrane helix</keyword>
<comment type="catalytic activity">
    <reaction>
        <text>L-seryl-[protein] + ATP = O-phospho-L-seryl-[protein] + ADP + H(+)</text>
        <dbReference type="Rhea" id="RHEA:17989"/>
        <dbReference type="Rhea" id="RHEA-COMP:9863"/>
        <dbReference type="Rhea" id="RHEA-COMP:11604"/>
        <dbReference type="ChEBI" id="CHEBI:15378"/>
        <dbReference type="ChEBI" id="CHEBI:29999"/>
        <dbReference type="ChEBI" id="CHEBI:30616"/>
        <dbReference type="ChEBI" id="CHEBI:83421"/>
        <dbReference type="ChEBI" id="CHEBI:456216"/>
    </reaction>
</comment>
<comment type="catalytic activity">
    <reaction>
        <text>L-threonyl-[protein] + ATP = O-phospho-L-threonyl-[protein] + ADP + H(+)</text>
        <dbReference type="Rhea" id="RHEA:46608"/>
        <dbReference type="Rhea" id="RHEA-COMP:11060"/>
        <dbReference type="Rhea" id="RHEA-COMP:11605"/>
        <dbReference type="ChEBI" id="CHEBI:15378"/>
        <dbReference type="ChEBI" id="CHEBI:30013"/>
        <dbReference type="ChEBI" id="CHEBI:30616"/>
        <dbReference type="ChEBI" id="CHEBI:61977"/>
        <dbReference type="ChEBI" id="CHEBI:456216"/>
    </reaction>
</comment>
<comment type="subcellular location">
    <subcellularLocation>
        <location evidence="6">Membrane</location>
        <topology evidence="6">Single-pass membrane protein</topology>
    </subcellularLocation>
</comment>
<comment type="similarity">
    <text evidence="3">Belongs to the protein kinase superfamily. Ser/Thr protein kinase family. CRK subfamily.</text>
</comment>